<evidence type="ECO:0000250" key="1"/>
<comment type="function">
    <text evidence="1">Catalyzes the synthesis of GMP from XMP.</text>
</comment>
<comment type="catalytic activity">
    <reaction>
        <text>XMP + L-glutamine + ATP + H2O = GMP + L-glutamate + AMP + diphosphate + 2 H(+)</text>
        <dbReference type="Rhea" id="RHEA:11680"/>
        <dbReference type="ChEBI" id="CHEBI:15377"/>
        <dbReference type="ChEBI" id="CHEBI:15378"/>
        <dbReference type="ChEBI" id="CHEBI:29985"/>
        <dbReference type="ChEBI" id="CHEBI:30616"/>
        <dbReference type="ChEBI" id="CHEBI:33019"/>
        <dbReference type="ChEBI" id="CHEBI:57464"/>
        <dbReference type="ChEBI" id="CHEBI:58115"/>
        <dbReference type="ChEBI" id="CHEBI:58359"/>
        <dbReference type="ChEBI" id="CHEBI:456215"/>
        <dbReference type="EC" id="6.3.5.2"/>
    </reaction>
</comment>
<comment type="pathway">
    <text>Purine metabolism; GMP biosynthesis; GMP from XMP (L-Gln route): step 1/1.</text>
</comment>
<comment type="subunit">
    <text evidence="1">Homodimer.</text>
</comment>
<keyword id="KW-0067">ATP-binding</keyword>
<keyword id="KW-0315">Glutamine amidotransferase</keyword>
<keyword id="KW-0332">GMP biosynthesis</keyword>
<keyword id="KW-0436">Ligase</keyword>
<keyword id="KW-0547">Nucleotide-binding</keyword>
<keyword id="KW-0658">Purine biosynthesis</keyword>
<accession>Q9ZKG4</accession>
<reference key="1">
    <citation type="journal article" date="1999" name="Nature">
        <title>Genomic sequence comparison of two unrelated isolates of the human gastric pathogen Helicobacter pylori.</title>
        <authorList>
            <person name="Alm R.A."/>
            <person name="Ling L.-S.L."/>
            <person name="Moir D.T."/>
            <person name="King B.L."/>
            <person name="Brown E.D."/>
            <person name="Doig P.C."/>
            <person name="Smith D.R."/>
            <person name="Noonan B."/>
            <person name="Guild B.C."/>
            <person name="deJonge B.L."/>
            <person name="Carmel G."/>
            <person name="Tummino P.J."/>
            <person name="Caruso A."/>
            <person name="Uria-Nickelsen M."/>
            <person name="Mills D.M."/>
            <person name="Ives C."/>
            <person name="Gibson R."/>
            <person name="Merberg D."/>
            <person name="Mills S.D."/>
            <person name="Jiang Q."/>
            <person name="Taylor D.E."/>
            <person name="Vovis G.F."/>
            <person name="Trust T.J."/>
        </authorList>
    </citation>
    <scope>NUCLEOTIDE SEQUENCE [LARGE SCALE GENOMIC DNA]</scope>
    <source>
        <strain>J99 / ATCC 700824</strain>
    </source>
</reference>
<sequence length="508" mass="56977">MILVLDFGSQYTQLIARRLRESGIYAEIVPFFESVENIQKKAPKGLILSGGPASVYAKDAYKPSEKIFDLNLPILGICYGMQYLVDFFGGVVAYANEQEFGKAILEIVQNSVIFEGVKIKSLVWMSHMDKVIELPKGFTTLAKSPNSPYCAIESDKIFGLQFHPEVIQSEEGGKILENFALLVCGCEKTWGMQHFAQREIVRLKEKIANAKVLCAVSGGVDSTVVATLLHRAIKDNLIAVFVDHGLLRKNEKEKVQAMFKDLQIPLNTIDAKEVFLSKLKGVSEPELKRKIIGETFIEVFEKEAKKHHLKGKIEFLAQGTLYPDVIESVSVKGPSKVIKTHHNVGGLPEWMDFKLIEPLRELFKDEVRLLGKELGVSQDFLMRHPFPGPGLAIRILGEINENKIKRLQEADAIFIEELKKANLYDKVWQAFCVLLNVNSVGVMGDNRTYENAICLRAVNASDGMTASFSFLEHSFLEKVSNRITNEVNGINRVVYDITSKPPGTIEWE</sequence>
<dbReference type="EC" id="6.3.5.2"/>
<dbReference type="EMBL" id="AE001439">
    <property type="protein sequence ID" value="AAD06548.1"/>
    <property type="molecule type" value="Genomic_DNA"/>
</dbReference>
<dbReference type="PIR" id="F71865">
    <property type="entry name" value="F71865"/>
</dbReference>
<dbReference type="RefSeq" id="WP_000604672.1">
    <property type="nucleotide sequence ID" value="NC_000921.1"/>
</dbReference>
<dbReference type="SMR" id="Q9ZKG4"/>
<dbReference type="MEROPS" id="C26.957"/>
<dbReference type="KEGG" id="hpj:jhp_0972"/>
<dbReference type="PATRIC" id="fig|85963.30.peg.1619"/>
<dbReference type="eggNOG" id="COG0518">
    <property type="taxonomic scope" value="Bacteria"/>
</dbReference>
<dbReference type="eggNOG" id="COG0519">
    <property type="taxonomic scope" value="Bacteria"/>
</dbReference>
<dbReference type="UniPathway" id="UPA00189">
    <property type="reaction ID" value="UER00296"/>
</dbReference>
<dbReference type="Proteomes" id="UP000000804">
    <property type="component" value="Chromosome"/>
</dbReference>
<dbReference type="GO" id="GO:0005829">
    <property type="term" value="C:cytosol"/>
    <property type="evidence" value="ECO:0007669"/>
    <property type="project" value="TreeGrafter"/>
</dbReference>
<dbReference type="GO" id="GO:0005524">
    <property type="term" value="F:ATP binding"/>
    <property type="evidence" value="ECO:0007669"/>
    <property type="project" value="UniProtKB-UniRule"/>
</dbReference>
<dbReference type="GO" id="GO:0003921">
    <property type="term" value="F:GMP synthase activity"/>
    <property type="evidence" value="ECO:0007669"/>
    <property type="project" value="InterPro"/>
</dbReference>
<dbReference type="CDD" id="cd01742">
    <property type="entry name" value="GATase1_GMP_Synthase"/>
    <property type="match status" value="1"/>
</dbReference>
<dbReference type="CDD" id="cd01997">
    <property type="entry name" value="GMP_synthase_C"/>
    <property type="match status" value="1"/>
</dbReference>
<dbReference type="FunFam" id="3.30.300.10:FF:000002">
    <property type="entry name" value="GMP synthase [glutamine-hydrolyzing]"/>
    <property type="match status" value="1"/>
</dbReference>
<dbReference type="FunFam" id="3.40.50.620:FF:000001">
    <property type="entry name" value="GMP synthase [glutamine-hydrolyzing]"/>
    <property type="match status" value="1"/>
</dbReference>
<dbReference type="FunFam" id="3.40.50.880:FF:000001">
    <property type="entry name" value="GMP synthase [glutamine-hydrolyzing]"/>
    <property type="match status" value="1"/>
</dbReference>
<dbReference type="Gene3D" id="3.30.300.10">
    <property type="match status" value="1"/>
</dbReference>
<dbReference type="Gene3D" id="3.40.50.880">
    <property type="match status" value="1"/>
</dbReference>
<dbReference type="Gene3D" id="3.40.50.620">
    <property type="entry name" value="HUPs"/>
    <property type="match status" value="1"/>
</dbReference>
<dbReference type="HAMAP" id="MF_00344">
    <property type="entry name" value="GMP_synthase"/>
    <property type="match status" value="1"/>
</dbReference>
<dbReference type="InterPro" id="IPR029062">
    <property type="entry name" value="Class_I_gatase-like"/>
</dbReference>
<dbReference type="InterPro" id="IPR017926">
    <property type="entry name" value="GATASE"/>
</dbReference>
<dbReference type="InterPro" id="IPR001674">
    <property type="entry name" value="GMP_synth_C"/>
</dbReference>
<dbReference type="InterPro" id="IPR004739">
    <property type="entry name" value="GMP_synth_GATase"/>
</dbReference>
<dbReference type="InterPro" id="IPR022955">
    <property type="entry name" value="GMP_synthase"/>
</dbReference>
<dbReference type="InterPro" id="IPR025777">
    <property type="entry name" value="GMPS_ATP_PPase_dom"/>
</dbReference>
<dbReference type="InterPro" id="IPR022310">
    <property type="entry name" value="NAD/GMP_synthase"/>
</dbReference>
<dbReference type="InterPro" id="IPR014729">
    <property type="entry name" value="Rossmann-like_a/b/a_fold"/>
</dbReference>
<dbReference type="NCBIfam" id="TIGR00884">
    <property type="entry name" value="guaA_Cterm"/>
    <property type="match status" value="1"/>
</dbReference>
<dbReference type="NCBIfam" id="TIGR00888">
    <property type="entry name" value="guaA_Nterm"/>
    <property type="match status" value="1"/>
</dbReference>
<dbReference type="NCBIfam" id="NF000848">
    <property type="entry name" value="PRK00074.1"/>
    <property type="match status" value="1"/>
</dbReference>
<dbReference type="PANTHER" id="PTHR11922:SF2">
    <property type="entry name" value="GMP SYNTHASE [GLUTAMINE-HYDROLYZING]"/>
    <property type="match status" value="1"/>
</dbReference>
<dbReference type="PANTHER" id="PTHR11922">
    <property type="entry name" value="GMP SYNTHASE-RELATED"/>
    <property type="match status" value="1"/>
</dbReference>
<dbReference type="Pfam" id="PF00117">
    <property type="entry name" value="GATase"/>
    <property type="match status" value="1"/>
</dbReference>
<dbReference type="Pfam" id="PF00958">
    <property type="entry name" value="GMP_synt_C"/>
    <property type="match status" value="1"/>
</dbReference>
<dbReference type="Pfam" id="PF02540">
    <property type="entry name" value="NAD_synthase"/>
    <property type="match status" value="1"/>
</dbReference>
<dbReference type="PRINTS" id="PR00097">
    <property type="entry name" value="ANTSNTHASEII"/>
</dbReference>
<dbReference type="PRINTS" id="PR00096">
    <property type="entry name" value="GATASE"/>
</dbReference>
<dbReference type="SUPFAM" id="SSF52402">
    <property type="entry name" value="Adenine nucleotide alpha hydrolases-like"/>
    <property type="match status" value="1"/>
</dbReference>
<dbReference type="SUPFAM" id="SSF52317">
    <property type="entry name" value="Class I glutamine amidotransferase-like"/>
    <property type="match status" value="1"/>
</dbReference>
<dbReference type="SUPFAM" id="SSF54810">
    <property type="entry name" value="GMP synthetase C-terminal dimerisation domain"/>
    <property type="match status" value="1"/>
</dbReference>
<dbReference type="PROSITE" id="PS51273">
    <property type="entry name" value="GATASE_TYPE_1"/>
    <property type="match status" value="1"/>
</dbReference>
<dbReference type="PROSITE" id="PS51553">
    <property type="entry name" value="GMPS_ATP_PPASE"/>
    <property type="match status" value="1"/>
</dbReference>
<proteinExistence type="inferred from homology"/>
<feature type="chain" id="PRO_0000140134" description="GMP synthase [glutamine-hydrolyzing]">
    <location>
        <begin position="1"/>
        <end position="508"/>
    </location>
</feature>
<feature type="domain" description="Glutamine amidotransferase type-1">
    <location>
        <begin position="1"/>
        <end position="189"/>
    </location>
</feature>
<feature type="domain" description="GMPS ATP-PPase">
    <location>
        <begin position="190"/>
        <end position="383"/>
    </location>
</feature>
<feature type="active site" description="Nucleophile" evidence="1">
    <location>
        <position position="78"/>
    </location>
</feature>
<feature type="active site" evidence="1">
    <location>
        <position position="163"/>
    </location>
</feature>
<feature type="active site" evidence="1">
    <location>
        <position position="165"/>
    </location>
</feature>
<feature type="binding site" evidence="1">
    <location>
        <begin position="217"/>
        <end position="223"/>
    </location>
    <ligand>
        <name>ATP</name>
        <dbReference type="ChEBI" id="CHEBI:30616"/>
    </ligand>
</feature>
<protein>
    <recommendedName>
        <fullName>GMP synthase [glutamine-hydrolyzing]</fullName>
        <ecNumber>6.3.5.2</ecNumber>
    </recommendedName>
    <alternativeName>
        <fullName>GMP synthetase</fullName>
    </alternativeName>
    <alternativeName>
        <fullName>Glutamine amidotransferase</fullName>
    </alternativeName>
</protein>
<name>GUAA_HELPJ</name>
<organism>
    <name type="scientific">Helicobacter pylori (strain J99 / ATCC 700824)</name>
    <name type="common">Campylobacter pylori J99</name>
    <dbReference type="NCBI Taxonomy" id="85963"/>
    <lineage>
        <taxon>Bacteria</taxon>
        <taxon>Pseudomonadati</taxon>
        <taxon>Campylobacterota</taxon>
        <taxon>Epsilonproteobacteria</taxon>
        <taxon>Campylobacterales</taxon>
        <taxon>Helicobacteraceae</taxon>
        <taxon>Helicobacter</taxon>
    </lineage>
</organism>
<gene>
    <name type="primary">guaA</name>
    <name type="ordered locus">jhp_0972</name>
</gene>